<gene>
    <name type="primary">znuC</name>
    <name type="synonym">adcC</name>
    <name type="synonym">ycdI</name>
    <name type="ordered locus">BSU02860</name>
</gene>
<comment type="function">
    <text evidence="1 4 5 6">Part of the high-affinity ABC transporter complex ZnuABC involved in zinc import (Probable). Responsible for energy coupling to the transport system (By similarity). ZnuABC-mediated zinc transport is required for comF expression and competence development.</text>
</comment>
<comment type="catalytic activity">
    <reaction>
        <text>Zn(2+)(out) + ATP(in) + H2O(in) = Zn(2+)(in) + ADP(in) + phosphate(in) + H(+)(in)</text>
        <dbReference type="Rhea" id="RHEA:29795"/>
        <dbReference type="ChEBI" id="CHEBI:15377"/>
        <dbReference type="ChEBI" id="CHEBI:15378"/>
        <dbReference type="ChEBI" id="CHEBI:29105"/>
        <dbReference type="ChEBI" id="CHEBI:30616"/>
        <dbReference type="ChEBI" id="CHEBI:43474"/>
        <dbReference type="ChEBI" id="CHEBI:456216"/>
        <dbReference type="EC" id="7.2.2.20"/>
    </reaction>
</comment>
<comment type="subunit">
    <text evidence="6">The complex is composed of two ATP-binding proteins (ZnuC), two transmembrane proteins (ZnuB) and a solute-binding protein (ZnuA).</text>
</comment>
<comment type="subcellular location">
    <subcellularLocation>
        <location evidence="1">Cell membrane</location>
        <topology evidence="1">Peripheral membrane protein</topology>
    </subcellularLocation>
</comment>
<comment type="induction">
    <text evidence="3 5">Repressed by zinc via the metallo-regulatory protein Zur.</text>
</comment>
<comment type="disruption phenotype">
    <text evidence="4">Disruption results in low transformability.</text>
</comment>
<comment type="similarity">
    <text evidence="6">Belongs to the ABC transporter superfamily.</text>
</comment>
<dbReference type="EC" id="7.2.2.20"/>
<dbReference type="EMBL" id="AB000617">
    <property type="protein sequence ID" value="BAA22247.1"/>
    <property type="molecule type" value="Genomic_DNA"/>
</dbReference>
<dbReference type="EMBL" id="AL009126">
    <property type="protein sequence ID" value="CAB12080.1"/>
    <property type="molecule type" value="Genomic_DNA"/>
</dbReference>
<dbReference type="PIR" id="B69756">
    <property type="entry name" value="B69756"/>
</dbReference>
<dbReference type="RefSeq" id="NP_388168.1">
    <property type="nucleotide sequence ID" value="NC_000964.3"/>
</dbReference>
<dbReference type="RefSeq" id="WP_003234730.1">
    <property type="nucleotide sequence ID" value="NZ_OZ025638.1"/>
</dbReference>
<dbReference type="SMR" id="O34946"/>
<dbReference type="FunCoup" id="O34946">
    <property type="interactions" value="214"/>
</dbReference>
<dbReference type="STRING" id="224308.BSU02860"/>
<dbReference type="TCDB" id="3.A.1.15.11">
    <property type="family name" value="the atp-binding cassette (abc) superfamily"/>
</dbReference>
<dbReference type="PaxDb" id="224308-BSU02860"/>
<dbReference type="EnsemblBacteria" id="CAB12080">
    <property type="protein sequence ID" value="CAB12080"/>
    <property type="gene ID" value="BSU_02860"/>
</dbReference>
<dbReference type="GeneID" id="938374"/>
<dbReference type="KEGG" id="bsu:BSU02860"/>
<dbReference type="PATRIC" id="fig|224308.179.peg.297"/>
<dbReference type="eggNOG" id="COG1121">
    <property type="taxonomic scope" value="Bacteria"/>
</dbReference>
<dbReference type="InParanoid" id="O34946"/>
<dbReference type="OrthoDB" id="9806726at2"/>
<dbReference type="PhylomeDB" id="O34946"/>
<dbReference type="BioCyc" id="BSUB:BSU02860-MONOMER"/>
<dbReference type="Proteomes" id="UP000001570">
    <property type="component" value="Chromosome"/>
</dbReference>
<dbReference type="GO" id="GO:0043190">
    <property type="term" value="C:ATP-binding cassette (ABC) transporter complex"/>
    <property type="evidence" value="ECO:0000318"/>
    <property type="project" value="GO_Central"/>
</dbReference>
<dbReference type="GO" id="GO:0015633">
    <property type="term" value="F:ABC-type zinc transporter activity"/>
    <property type="evidence" value="ECO:0007669"/>
    <property type="project" value="UniProtKB-EC"/>
</dbReference>
<dbReference type="GO" id="GO:0005524">
    <property type="term" value="F:ATP binding"/>
    <property type="evidence" value="ECO:0007669"/>
    <property type="project" value="UniProtKB-KW"/>
</dbReference>
<dbReference type="GO" id="GO:0016887">
    <property type="term" value="F:ATP hydrolysis activity"/>
    <property type="evidence" value="ECO:0007669"/>
    <property type="project" value="InterPro"/>
</dbReference>
<dbReference type="GO" id="GO:0042626">
    <property type="term" value="F:ATPase-coupled transmembrane transporter activity"/>
    <property type="evidence" value="ECO:0000318"/>
    <property type="project" value="GO_Central"/>
</dbReference>
<dbReference type="CDD" id="cd03235">
    <property type="entry name" value="ABC_Metallic_Cations"/>
    <property type="match status" value="1"/>
</dbReference>
<dbReference type="FunFam" id="3.40.50.300:FF:001378">
    <property type="entry name" value="Zinc ABC transporter, ATP-binding protein"/>
    <property type="match status" value="1"/>
</dbReference>
<dbReference type="Gene3D" id="3.40.50.300">
    <property type="entry name" value="P-loop containing nucleotide triphosphate hydrolases"/>
    <property type="match status" value="1"/>
</dbReference>
<dbReference type="InterPro" id="IPR003593">
    <property type="entry name" value="AAA+_ATPase"/>
</dbReference>
<dbReference type="InterPro" id="IPR003439">
    <property type="entry name" value="ABC_transporter-like_ATP-bd"/>
</dbReference>
<dbReference type="InterPro" id="IPR017871">
    <property type="entry name" value="ABC_transporter-like_CS"/>
</dbReference>
<dbReference type="InterPro" id="IPR050153">
    <property type="entry name" value="Metal_Ion_Import_ABC"/>
</dbReference>
<dbReference type="InterPro" id="IPR027417">
    <property type="entry name" value="P-loop_NTPase"/>
</dbReference>
<dbReference type="PANTHER" id="PTHR42734:SF4">
    <property type="entry name" value="HIGH-AFFINITY ZINC UPTAKE SYSTEM ATP-BINDING PROTEIN ZNUC"/>
    <property type="match status" value="1"/>
</dbReference>
<dbReference type="PANTHER" id="PTHR42734">
    <property type="entry name" value="METAL TRANSPORT SYSTEM ATP-BINDING PROTEIN TM_0124-RELATED"/>
    <property type="match status" value="1"/>
</dbReference>
<dbReference type="Pfam" id="PF00005">
    <property type="entry name" value="ABC_tran"/>
    <property type="match status" value="1"/>
</dbReference>
<dbReference type="SMART" id="SM00382">
    <property type="entry name" value="AAA"/>
    <property type="match status" value="1"/>
</dbReference>
<dbReference type="SUPFAM" id="SSF52540">
    <property type="entry name" value="P-loop containing nucleoside triphosphate hydrolases"/>
    <property type="match status" value="1"/>
</dbReference>
<dbReference type="PROSITE" id="PS00211">
    <property type="entry name" value="ABC_TRANSPORTER_1"/>
    <property type="match status" value="1"/>
</dbReference>
<dbReference type="PROSITE" id="PS50893">
    <property type="entry name" value="ABC_TRANSPORTER_2"/>
    <property type="match status" value="1"/>
</dbReference>
<name>ZNUC_BACSU</name>
<feature type="chain" id="PRO_0000360808" description="High-affinity zinc uptake system ATP-binding protein ZnuC">
    <location>
        <begin position="1"/>
        <end position="231"/>
    </location>
</feature>
<feature type="domain" description="ABC transporter" evidence="2">
    <location>
        <begin position="4"/>
        <end position="230"/>
    </location>
</feature>
<organism>
    <name type="scientific">Bacillus subtilis (strain 168)</name>
    <dbReference type="NCBI Taxonomy" id="224308"/>
    <lineage>
        <taxon>Bacteria</taxon>
        <taxon>Bacillati</taxon>
        <taxon>Bacillota</taxon>
        <taxon>Bacilli</taxon>
        <taxon>Bacillales</taxon>
        <taxon>Bacillaceae</taxon>
        <taxon>Bacillus</taxon>
    </lineage>
</organism>
<accession>O34946</accession>
<accession>Q797R5</accession>
<keyword id="KW-0067">ATP-binding</keyword>
<keyword id="KW-1003">Cell membrane</keyword>
<keyword id="KW-0406">Ion transport</keyword>
<keyword id="KW-0472">Membrane</keyword>
<keyword id="KW-0547">Nucleotide-binding</keyword>
<keyword id="KW-1185">Reference proteome</keyword>
<keyword id="KW-1278">Translocase</keyword>
<keyword id="KW-0813">Transport</keyword>
<keyword id="KW-0862">Zinc</keyword>
<keyword id="KW-0864">Zinc transport</keyword>
<reference key="1">
    <citation type="journal article" date="1997" name="Microbiology">
        <title>A 32 kb nucleotide sequence from the region of the lincomycin-resistance gene (22 degrees-25 degrees) of the Bacillus subtilis chromosome and identification of the site of the lin-2 mutation.</title>
        <authorList>
            <person name="Kumano M."/>
            <person name="Tamakoshi A."/>
            <person name="Yamane K."/>
        </authorList>
    </citation>
    <scope>NUCLEOTIDE SEQUENCE [GENOMIC DNA]</scope>
    <source>
        <strain>168</strain>
    </source>
</reference>
<reference key="2">
    <citation type="journal article" date="1997" name="Nature">
        <title>The complete genome sequence of the Gram-positive bacterium Bacillus subtilis.</title>
        <authorList>
            <person name="Kunst F."/>
            <person name="Ogasawara N."/>
            <person name="Moszer I."/>
            <person name="Albertini A.M."/>
            <person name="Alloni G."/>
            <person name="Azevedo V."/>
            <person name="Bertero M.G."/>
            <person name="Bessieres P."/>
            <person name="Bolotin A."/>
            <person name="Borchert S."/>
            <person name="Borriss R."/>
            <person name="Boursier L."/>
            <person name="Brans A."/>
            <person name="Braun M."/>
            <person name="Brignell S.C."/>
            <person name="Bron S."/>
            <person name="Brouillet S."/>
            <person name="Bruschi C.V."/>
            <person name="Caldwell B."/>
            <person name="Capuano V."/>
            <person name="Carter N.M."/>
            <person name="Choi S.-K."/>
            <person name="Codani J.-J."/>
            <person name="Connerton I.F."/>
            <person name="Cummings N.J."/>
            <person name="Daniel R.A."/>
            <person name="Denizot F."/>
            <person name="Devine K.M."/>
            <person name="Duesterhoeft A."/>
            <person name="Ehrlich S.D."/>
            <person name="Emmerson P.T."/>
            <person name="Entian K.-D."/>
            <person name="Errington J."/>
            <person name="Fabret C."/>
            <person name="Ferrari E."/>
            <person name="Foulger D."/>
            <person name="Fritz C."/>
            <person name="Fujita M."/>
            <person name="Fujita Y."/>
            <person name="Fuma S."/>
            <person name="Galizzi A."/>
            <person name="Galleron N."/>
            <person name="Ghim S.-Y."/>
            <person name="Glaser P."/>
            <person name="Goffeau A."/>
            <person name="Golightly E.J."/>
            <person name="Grandi G."/>
            <person name="Guiseppi G."/>
            <person name="Guy B.J."/>
            <person name="Haga K."/>
            <person name="Haiech J."/>
            <person name="Harwood C.R."/>
            <person name="Henaut A."/>
            <person name="Hilbert H."/>
            <person name="Holsappel S."/>
            <person name="Hosono S."/>
            <person name="Hullo M.-F."/>
            <person name="Itaya M."/>
            <person name="Jones L.-M."/>
            <person name="Joris B."/>
            <person name="Karamata D."/>
            <person name="Kasahara Y."/>
            <person name="Klaerr-Blanchard M."/>
            <person name="Klein C."/>
            <person name="Kobayashi Y."/>
            <person name="Koetter P."/>
            <person name="Koningstein G."/>
            <person name="Krogh S."/>
            <person name="Kumano M."/>
            <person name="Kurita K."/>
            <person name="Lapidus A."/>
            <person name="Lardinois S."/>
            <person name="Lauber J."/>
            <person name="Lazarevic V."/>
            <person name="Lee S.-M."/>
            <person name="Levine A."/>
            <person name="Liu H."/>
            <person name="Masuda S."/>
            <person name="Mauel C."/>
            <person name="Medigue C."/>
            <person name="Medina N."/>
            <person name="Mellado R.P."/>
            <person name="Mizuno M."/>
            <person name="Moestl D."/>
            <person name="Nakai S."/>
            <person name="Noback M."/>
            <person name="Noone D."/>
            <person name="O'Reilly M."/>
            <person name="Ogawa K."/>
            <person name="Ogiwara A."/>
            <person name="Oudega B."/>
            <person name="Park S.-H."/>
            <person name="Parro V."/>
            <person name="Pohl T.M."/>
            <person name="Portetelle D."/>
            <person name="Porwollik S."/>
            <person name="Prescott A.M."/>
            <person name="Presecan E."/>
            <person name="Pujic P."/>
            <person name="Purnelle B."/>
            <person name="Rapoport G."/>
            <person name="Rey M."/>
            <person name="Reynolds S."/>
            <person name="Rieger M."/>
            <person name="Rivolta C."/>
            <person name="Rocha E."/>
            <person name="Roche B."/>
            <person name="Rose M."/>
            <person name="Sadaie Y."/>
            <person name="Sato T."/>
            <person name="Scanlan E."/>
            <person name="Schleich S."/>
            <person name="Schroeter R."/>
            <person name="Scoffone F."/>
            <person name="Sekiguchi J."/>
            <person name="Sekowska A."/>
            <person name="Seror S.J."/>
            <person name="Serror P."/>
            <person name="Shin B.-S."/>
            <person name="Soldo B."/>
            <person name="Sorokin A."/>
            <person name="Tacconi E."/>
            <person name="Takagi T."/>
            <person name="Takahashi H."/>
            <person name="Takemaru K."/>
            <person name="Takeuchi M."/>
            <person name="Tamakoshi A."/>
            <person name="Tanaka T."/>
            <person name="Terpstra P."/>
            <person name="Tognoni A."/>
            <person name="Tosato V."/>
            <person name="Uchiyama S."/>
            <person name="Vandenbol M."/>
            <person name="Vannier F."/>
            <person name="Vassarotti A."/>
            <person name="Viari A."/>
            <person name="Wambutt R."/>
            <person name="Wedler E."/>
            <person name="Wedler H."/>
            <person name="Weitzenegger T."/>
            <person name="Winters P."/>
            <person name="Wipat A."/>
            <person name="Yamamoto H."/>
            <person name="Yamane K."/>
            <person name="Yasumoto K."/>
            <person name="Yata K."/>
            <person name="Yoshida K."/>
            <person name="Yoshikawa H.-F."/>
            <person name="Zumstein E."/>
            <person name="Yoshikawa H."/>
            <person name="Danchin A."/>
        </authorList>
    </citation>
    <scope>NUCLEOTIDE SEQUENCE [LARGE SCALE GENOMIC DNA]</scope>
    <source>
        <strain>168</strain>
    </source>
</reference>
<reference key="3">
    <citation type="journal article" date="1998" name="J. Bacteriol.">
        <title>Identification of a zinc-specific metalloregulatory protein, Zur, controlling zinc transport operons in Bacillus subtilis.</title>
        <authorList>
            <person name="Gaballa A."/>
            <person name="Helmann J.D."/>
        </authorList>
    </citation>
    <scope>FUNCTION</scope>
    <scope>INDUCTION</scope>
</reference>
<reference key="4">
    <citation type="journal article" date="2002" name="J. Bacteriol.">
        <title>Functional analysis of the Bacillus subtilis Zur regulon.</title>
        <authorList>
            <person name="Gaballa A."/>
            <person name="Wang T."/>
            <person name="Ye R.W."/>
            <person name="Helmann J.D."/>
        </authorList>
    </citation>
    <scope>INDUCTION</scope>
    <source>
        <strain>168</strain>
    </source>
</reference>
<reference key="5">
    <citation type="journal article" date="2011" name="J. Biochem.">
        <title>ZnuABC and ZosA zinc transporters are differently involved in competence development in Bacillus subtilis.</title>
        <authorList>
            <person name="Ogura M."/>
        </authorList>
    </citation>
    <scope>FUNCTION IN COMPETENCE DEVELOPMENT</scope>
    <scope>DISRUPTION PHENOTYPE</scope>
    <scope>GENE NAME</scope>
    <source>
        <strain>168</strain>
    </source>
</reference>
<protein>
    <recommendedName>
        <fullName>High-affinity zinc uptake system ATP-binding protein ZnuC</fullName>
        <ecNumber>7.2.2.20</ecNumber>
    </recommendedName>
</protein>
<proteinExistence type="evidence at protein level"/>
<sequence length="231" mass="26319">MNLVSLKDIVFGYSHTPVLDKVSLDIESGEFVGITGPNGASKSTLIKVMLGMLKPWEGTVTISKRNTEGKRLTIGYVPQQISSFNAGFPSTVLELVQSGRYTKGKWFKRLNEEDHLEVEKALKMVEMWDLRHRKIGDLSGGQKQKICIARMLASNPDLLMLDEPTTAVDYDSRKGFYEFMHHLVKNHNRTVVMVTHEQNEVQQFLDKVIRLERGEKGGWKCLTWNSCDELF</sequence>
<evidence type="ECO:0000250" key="1"/>
<evidence type="ECO:0000255" key="2">
    <source>
        <dbReference type="PROSITE-ProRule" id="PRU00434"/>
    </source>
</evidence>
<evidence type="ECO:0000269" key="3">
    <source>
    </source>
</evidence>
<evidence type="ECO:0000269" key="4">
    <source>
    </source>
</evidence>
<evidence type="ECO:0000269" key="5">
    <source>
    </source>
</evidence>
<evidence type="ECO:0000305" key="6"/>